<evidence type="ECO:0000255" key="1">
    <source>
        <dbReference type="HAMAP-Rule" id="MF_00042"/>
    </source>
</evidence>
<evidence type="ECO:0000255" key="2">
    <source>
        <dbReference type="PROSITE-ProRule" id="PRU00408"/>
    </source>
</evidence>
<dbReference type="EC" id="3.1.26.4" evidence="1"/>
<dbReference type="EMBL" id="CP000607">
    <property type="protein sequence ID" value="ABP37408.1"/>
    <property type="molecule type" value="Genomic_DNA"/>
</dbReference>
<dbReference type="SMR" id="A4SFZ9"/>
<dbReference type="STRING" id="290318.Cvib_1397"/>
<dbReference type="KEGG" id="pvi:Cvib_1397"/>
<dbReference type="eggNOG" id="COG0328">
    <property type="taxonomic scope" value="Bacteria"/>
</dbReference>
<dbReference type="HOGENOM" id="CLU_030894_6_2_10"/>
<dbReference type="OrthoDB" id="7845843at2"/>
<dbReference type="GO" id="GO:0005737">
    <property type="term" value="C:cytoplasm"/>
    <property type="evidence" value="ECO:0007669"/>
    <property type="project" value="UniProtKB-SubCell"/>
</dbReference>
<dbReference type="GO" id="GO:0000287">
    <property type="term" value="F:magnesium ion binding"/>
    <property type="evidence" value="ECO:0007669"/>
    <property type="project" value="UniProtKB-UniRule"/>
</dbReference>
<dbReference type="GO" id="GO:0003676">
    <property type="term" value="F:nucleic acid binding"/>
    <property type="evidence" value="ECO:0007669"/>
    <property type="project" value="InterPro"/>
</dbReference>
<dbReference type="GO" id="GO:0004523">
    <property type="term" value="F:RNA-DNA hybrid ribonuclease activity"/>
    <property type="evidence" value="ECO:0007669"/>
    <property type="project" value="UniProtKB-UniRule"/>
</dbReference>
<dbReference type="GO" id="GO:0043137">
    <property type="term" value="P:DNA replication, removal of RNA primer"/>
    <property type="evidence" value="ECO:0007669"/>
    <property type="project" value="TreeGrafter"/>
</dbReference>
<dbReference type="CDD" id="cd09278">
    <property type="entry name" value="RNase_HI_prokaryote_like"/>
    <property type="match status" value="1"/>
</dbReference>
<dbReference type="FunFam" id="3.30.420.10:FF:000089">
    <property type="entry name" value="Ribonuclease H"/>
    <property type="match status" value="1"/>
</dbReference>
<dbReference type="Gene3D" id="3.30.420.10">
    <property type="entry name" value="Ribonuclease H-like superfamily/Ribonuclease H"/>
    <property type="match status" value="1"/>
</dbReference>
<dbReference type="HAMAP" id="MF_00042">
    <property type="entry name" value="RNase_H"/>
    <property type="match status" value="1"/>
</dbReference>
<dbReference type="InterPro" id="IPR050092">
    <property type="entry name" value="RNase_H"/>
</dbReference>
<dbReference type="InterPro" id="IPR012337">
    <property type="entry name" value="RNaseH-like_sf"/>
</dbReference>
<dbReference type="InterPro" id="IPR002156">
    <property type="entry name" value="RNaseH_domain"/>
</dbReference>
<dbReference type="InterPro" id="IPR036397">
    <property type="entry name" value="RNaseH_sf"/>
</dbReference>
<dbReference type="InterPro" id="IPR022892">
    <property type="entry name" value="RNaseHI"/>
</dbReference>
<dbReference type="NCBIfam" id="NF001236">
    <property type="entry name" value="PRK00203.1"/>
    <property type="match status" value="1"/>
</dbReference>
<dbReference type="PANTHER" id="PTHR10642">
    <property type="entry name" value="RIBONUCLEASE H1"/>
    <property type="match status" value="1"/>
</dbReference>
<dbReference type="PANTHER" id="PTHR10642:SF26">
    <property type="entry name" value="RIBONUCLEASE H1"/>
    <property type="match status" value="1"/>
</dbReference>
<dbReference type="Pfam" id="PF00075">
    <property type="entry name" value="RNase_H"/>
    <property type="match status" value="1"/>
</dbReference>
<dbReference type="SUPFAM" id="SSF53098">
    <property type="entry name" value="Ribonuclease H-like"/>
    <property type="match status" value="1"/>
</dbReference>
<dbReference type="PROSITE" id="PS50879">
    <property type="entry name" value="RNASE_H_1"/>
    <property type="match status" value="1"/>
</dbReference>
<keyword id="KW-0963">Cytoplasm</keyword>
<keyword id="KW-0255">Endonuclease</keyword>
<keyword id="KW-0378">Hydrolase</keyword>
<keyword id="KW-0460">Magnesium</keyword>
<keyword id="KW-0479">Metal-binding</keyword>
<keyword id="KW-0540">Nuclease</keyword>
<accession>A4SFZ9</accession>
<gene>
    <name evidence="1" type="primary">rnhA</name>
    <name type="ordered locus">Cvib_1397</name>
</gene>
<proteinExistence type="inferred from homology"/>
<feature type="chain" id="PRO_0000332652" description="Ribonuclease H">
    <location>
        <begin position="1"/>
        <end position="146"/>
    </location>
</feature>
<feature type="domain" description="RNase H type-1" evidence="2">
    <location>
        <begin position="1"/>
        <end position="143"/>
    </location>
</feature>
<feature type="binding site" evidence="1">
    <location>
        <position position="10"/>
    </location>
    <ligand>
        <name>Mg(2+)</name>
        <dbReference type="ChEBI" id="CHEBI:18420"/>
        <label>1</label>
    </ligand>
</feature>
<feature type="binding site" evidence="1">
    <location>
        <position position="10"/>
    </location>
    <ligand>
        <name>Mg(2+)</name>
        <dbReference type="ChEBI" id="CHEBI:18420"/>
        <label>2</label>
    </ligand>
</feature>
<feature type="binding site" evidence="1">
    <location>
        <position position="48"/>
    </location>
    <ligand>
        <name>Mg(2+)</name>
        <dbReference type="ChEBI" id="CHEBI:18420"/>
        <label>1</label>
    </ligand>
</feature>
<feature type="binding site" evidence="1">
    <location>
        <position position="70"/>
    </location>
    <ligand>
        <name>Mg(2+)</name>
        <dbReference type="ChEBI" id="CHEBI:18420"/>
        <label>1</label>
    </ligand>
</feature>
<feature type="binding site" evidence="1">
    <location>
        <position position="135"/>
    </location>
    <ligand>
        <name>Mg(2+)</name>
        <dbReference type="ChEBI" id="CHEBI:18420"/>
        <label>2</label>
    </ligand>
</feature>
<reference key="1">
    <citation type="submission" date="2007-03" db="EMBL/GenBank/DDBJ databases">
        <title>Complete sequence of Prosthecochloris vibrioformis DSM 265.</title>
        <authorList>
            <consortium name="US DOE Joint Genome Institute"/>
            <person name="Copeland A."/>
            <person name="Lucas S."/>
            <person name="Lapidus A."/>
            <person name="Barry K."/>
            <person name="Detter J.C."/>
            <person name="Glavina del Rio T."/>
            <person name="Hammon N."/>
            <person name="Israni S."/>
            <person name="Pitluck S."/>
            <person name="Schmutz J."/>
            <person name="Larimer F."/>
            <person name="Land M."/>
            <person name="Hauser L."/>
            <person name="Mikhailova N."/>
            <person name="Li T."/>
            <person name="Overmann J."/>
            <person name="Schuster S.C."/>
            <person name="Bryant D.A."/>
            <person name="Richardson P."/>
        </authorList>
    </citation>
    <scope>NUCLEOTIDE SEQUENCE [LARGE SCALE GENOMIC DNA]</scope>
    <source>
        <strain>DSM 265 / 1930</strain>
    </source>
</reference>
<comment type="function">
    <text evidence="1">Endonuclease that specifically degrades the RNA of RNA-DNA hybrids.</text>
</comment>
<comment type="catalytic activity">
    <reaction evidence="1">
        <text>Endonucleolytic cleavage to 5'-phosphomonoester.</text>
        <dbReference type="EC" id="3.1.26.4"/>
    </reaction>
</comment>
<comment type="cofactor">
    <cofactor evidence="1">
        <name>Mg(2+)</name>
        <dbReference type="ChEBI" id="CHEBI:18420"/>
    </cofactor>
    <text evidence="1">Binds 1 Mg(2+) ion per subunit. May bind a second metal ion at a regulatory site, or after substrate binding.</text>
</comment>
<comment type="subunit">
    <text evidence="1">Monomer.</text>
</comment>
<comment type="subcellular location">
    <subcellularLocation>
        <location evidence="1">Cytoplasm</location>
    </subcellularLocation>
</comment>
<comment type="similarity">
    <text evidence="1">Belongs to the RNase H family.</text>
</comment>
<organism>
    <name type="scientific">Chlorobium phaeovibrioides (strain DSM 265 / 1930)</name>
    <name type="common">Prosthecochloris vibrioformis (strain DSM 265)</name>
    <dbReference type="NCBI Taxonomy" id="290318"/>
    <lineage>
        <taxon>Bacteria</taxon>
        <taxon>Pseudomonadati</taxon>
        <taxon>Chlorobiota</taxon>
        <taxon>Chlorobiia</taxon>
        <taxon>Chlorobiales</taxon>
        <taxon>Chlorobiaceae</taxon>
        <taxon>Chlorobium/Pelodictyon group</taxon>
        <taxon>Chlorobium</taxon>
    </lineage>
</organism>
<protein>
    <recommendedName>
        <fullName evidence="1">Ribonuclease H</fullName>
        <shortName evidence="1">RNase H</shortName>
        <ecNumber evidence="1">3.1.26.4</ecNumber>
    </recommendedName>
</protein>
<name>RNH_CHLPM</name>
<sequence>MEKKVTIYTDGACSGNPGPGGWGAMLMYGKTVREISGGAPATTNNRMELSAAIEALQALKEPCTVDLYSDSSYLVNAINEGWLKRWTANRWKTAAKKTVENIDLWQKILELTDRHRVRFHKVKGHSDNPYNNRCDELARLAVRKKP</sequence>